<evidence type="ECO:0000255" key="1">
    <source>
        <dbReference type="HAMAP-Rule" id="MF_00120"/>
    </source>
</evidence>
<reference key="1">
    <citation type="journal article" date="2009" name="ISME J.">
        <title>The genome sequence of the psychrophilic archaeon, Methanococcoides burtonii: the role of genome evolution in cold adaptation.</title>
        <authorList>
            <person name="Allen M.A."/>
            <person name="Lauro F.M."/>
            <person name="Williams T.J."/>
            <person name="Burg D."/>
            <person name="Siddiqui K.S."/>
            <person name="De Francisci D."/>
            <person name="Chong K.W."/>
            <person name="Pilak O."/>
            <person name="Chew H.H."/>
            <person name="De Maere M.Z."/>
            <person name="Ting L."/>
            <person name="Katrib M."/>
            <person name="Ng C."/>
            <person name="Sowers K.R."/>
            <person name="Galperin M.Y."/>
            <person name="Anderson I.J."/>
            <person name="Ivanova N."/>
            <person name="Dalin E."/>
            <person name="Martinez M."/>
            <person name="Lapidus A."/>
            <person name="Hauser L."/>
            <person name="Land M."/>
            <person name="Thomas T."/>
            <person name="Cavicchioli R."/>
        </authorList>
    </citation>
    <scope>NUCLEOTIDE SEQUENCE [LARGE SCALE GENOMIC DNA]</scope>
    <source>
        <strain>DSM 6242 / NBRC 107633 / OCM 468 / ACE-M</strain>
    </source>
</reference>
<keyword id="KW-0067">ATP-binding</keyword>
<keyword id="KW-0436">Ligase</keyword>
<keyword id="KW-0547">Nucleotide-binding</keyword>
<keyword id="KW-0648">Protein biosynthesis</keyword>
<name>GATA_METBU</name>
<comment type="function">
    <text evidence="1">Allows the formation of correctly charged Gln-tRNA(Gln) through the transamidation of misacylated Glu-tRNA(Gln) in organisms which lack glutaminyl-tRNA synthetase. The reaction takes place in the presence of glutamine and ATP through an activated gamma-phospho-Glu-tRNA(Gln).</text>
</comment>
<comment type="catalytic activity">
    <reaction evidence="1">
        <text>L-glutamyl-tRNA(Gln) + L-glutamine + ATP + H2O = L-glutaminyl-tRNA(Gln) + L-glutamate + ADP + phosphate + H(+)</text>
        <dbReference type="Rhea" id="RHEA:17521"/>
        <dbReference type="Rhea" id="RHEA-COMP:9681"/>
        <dbReference type="Rhea" id="RHEA-COMP:9684"/>
        <dbReference type="ChEBI" id="CHEBI:15377"/>
        <dbReference type="ChEBI" id="CHEBI:15378"/>
        <dbReference type="ChEBI" id="CHEBI:29985"/>
        <dbReference type="ChEBI" id="CHEBI:30616"/>
        <dbReference type="ChEBI" id="CHEBI:43474"/>
        <dbReference type="ChEBI" id="CHEBI:58359"/>
        <dbReference type="ChEBI" id="CHEBI:78520"/>
        <dbReference type="ChEBI" id="CHEBI:78521"/>
        <dbReference type="ChEBI" id="CHEBI:456216"/>
        <dbReference type="EC" id="6.3.5.7"/>
    </reaction>
</comment>
<comment type="subunit">
    <text evidence="1">Heterotrimer of A, B and C subunits.</text>
</comment>
<comment type="similarity">
    <text evidence="1">Belongs to the amidase family. GatA subfamily.</text>
</comment>
<organism>
    <name type="scientific">Methanococcoides burtonii (strain DSM 6242 / NBRC 107633 / OCM 468 / ACE-M)</name>
    <dbReference type="NCBI Taxonomy" id="259564"/>
    <lineage>
        <taxon>Archaea</taxon>
        <taxon>Methanobacteriati</taxon>
        <taxon>Methanobacteriota</taxon>
        <taxon>Stenosarchaea group</taxon>
        <taxon>Methanomicrobia</taxon>
        <taxon>Methanosarcinales</taxon>
        <taxon>Methanosarcinaceae</taxon>
        <taxon>Methanococcoides</taxon>
    </lineage>
</organism>
<accession>Q12VH1</accession>
<sequence>MTKWLSISDVKEKIAATSAEEVTASYLELIDKSSINGYTCTSDGALDTAKMVDKGEVAGPLAGVPIAIKDNISTKGLATTCSSKILEGYVPPYDAHVIERLKEAGAVIIGKTNMDEFAMGTSTESSCYGVTLNPWDHERVPGGSSGGSAAVVAAGEAPISLGSDTGGSVRCPAAFCGVVGLKPTYGAVSRYGLISYANSLEQIGPMATCVEDIAAVMDVIGGYDARDSTSIDKKIDHQAALIDDVKGLKIGVPDEYFGEGVDSGTENAVWDAINKYEEMDASWEKVSMPNTKYALAAYYTIAMSEASSNLARFDGTRYGPRNDGENWHVMASKTRAENFGKEVQRRILLGTYALSAGYQDKYYLKALQVRTLVKQDFDRAFANFDVLMAPTMPLPAFKIGEMVEDPLSQYLIDVNTVPMNLAGVPCISVPCGSSDGLPVGLQIIGNHFDEAALIRAAYSFEKNTDHHKARPGEVA</sequence>
<proteinExistence type="inferred from homology"/>
<feature type="chain" id="PRO_1000015859" description="Glutamyl-tRNA(Gln) amidotransferase subunit A">
    <location>
        <begin position="1"/>
        <end position="475"/>
    </location>
</feature>
<feature type="active site" description="Charge relay system" evidence="1">
    <location>
        <position position="69"/>
    </location>
</feature>
<feature type="active site" description="Charge relay system" evidence="1">
    <location>
        <position position="144"/>
    </location>
</feature>
<feature type="active site" description="Acyl-ester intermediate" evidence="1">
    <location>
        <position position="168"/>
    </location>
</feature>
<gene>
    <name evidence="1" type="primary">gatA</name>
    <name type="ordered locus">Mbur_1655</name>
</gene>
<protein>
    <recommendedName>
        <fullName evidence="1">Glutamyl-tRNA(Gln) amidotransferase subunit A</fullName>
        <shortName evidence="1">Glu-ADT subunit A</shortName>
        <ecNumber evidence="1">6.3.5.7</ecNumber>
    </recommendedName>
</protein>
<dbReference type="EC" id="6.3.5.7" evidence="1"/>
<dbReference type="EMBL" id="CP000300">
    <property type="protein sequence ID" value="ABE52555.1"/>
    <property type="molecule type" value="Genomic_DNA"/>
</dbReference>
<dbReference type="RefSeq" id="WP_011499698.1">
    <property type="nucleotide sequence ID" value="NC_007955.1"/>
</dbReference>
<dbReference type="SMR" id="Q12VH1"/>
<dbReference type="STRING" id="259564.Mbur_1655"/>
<dbReference type="GeneID" id="3997288"/>
<dbReference type="KEGG" id="mbu:Mbur_1655"/>
<dbReference type="HOGENOM" id="CLU_009600_0_3_2"/>
<dbReference type="OrthoDB" id="7931at2157"/>
<dbReference type="Proteomes" id="UP000001979">
    <property type="component" value="Chromosome"/>
</dbReference>
<dbReference type="GO" id="GO:0030956">
    <property type="term" value="C:glutamyl-tRNA(Gln) amidotransferase complex"/>
    <property type="evidence" value="ECO:0007669"/>
    <property type="project" value="InterPro"/>
</dbReference>
<dbReference type="GO" id="GO:0005524">
    <property type="term" value="F:ATP binding"/>
    <property type="evidence" value="ECO:0007669"/>
    <property type="project" value="UniProtKB-KW"/>
</dbReference>
<dbReference type="GO" id="GO:0050567">
    <property type="term" value="F:glutaminyl-tRNA synthase (glutamine-hydrolyzing) activity"/>
    <property type="evidence" value="ECO:0007669"/>
    <property type="project" value="UniProtKB-UniRule"/>
</dbReference>
<dbReference type="GO" id="GO:0006412">
    <property type="term" value="P:translation"/>
    <property type="evidence" value="ECO:0007669"/>
    <property type="project" value="UniProtKB-UniRule"/>
</dbReference>
<dbReference type="Gene3D" id="3.90.1300.10">
    <property type="entry name" value="Amidase signature (AS) domain"/>
    <property type="match status" value="1"/>
</dbReference>
<dbReference type="HAMAP" id="MF_00120">
    <property type="entry name" value="GatA"/>
    <property type="match status" value="1"/>
</dbReference>
<dbReference type="InterPro" id="IPR000120">
    <property type="entry name" value="Amidase"/>
</dbReference>
<dbReference type="InterPro" id="IPR020556">
    <property type="entry name" value="Amidase_CS"/>
</dbReference>
<dbReference type="InterPro" id="IPR023631">
    <property type="entry name" value="Amidase_dom"/>
</dbReference>
<dbReference type="InterPro" id="IPR036928">
    <property type="entry name" value="AS_sf"/>
</dbReference>
<dbReference type="InterPro" id="IPR004412">
    <property type="entry name" value="GatA"/>
</dbReference>
<dbReference type="NCBIfam" id="TIGR00132">
    <property type="entry name" value="gatA"/>
    <property type="match status" value="1"/>
</dbReference>
<dbReference type="PANTHER" id="PTHR11895:SF7">
    <property type="entry name" value="GLUTAMYL-TRNA(GLN) AMIDOTRANSFERASE SUBUNIT A, MITOCHONDRIAL"/>
    <property type="match status" value="1"/>
</dbReference>
<dbReference type="PANTHER" id="PTHR11895">
    <property type="entry name" value="TRANSAMIDASE"/>
    <property type="match status" value="1"/>
</dbReference>
<dbReference type="Pfam" id="PF01425">
    <property type="entry name" value="Amidase"/>
    <property type="match status" value="1"/>
</dbReference>
<dbReference type="SUPFAM" id="SSF75304">
    <property type="entry name" value="Amidase signature (AS) enzymes"/>
    <property type="match status" value="1"/>
</dbReference>
<dbReference type="PROSITE" id="PS00571">
    <property type="entry name" value="AMIDASES"/>
    <property type="match status" value="1"/>
</dbReference>